<keyword id="KW-0066">ATP synthesis</keyword>
<keyword id="KW-0067">ATP-binding</keyword>
<keyword id="KW-0997">Cell inner membrane</keyword>
<keyword id="KW-1003">Cell membrane</keyword>
<keyword id="KW-0139">CF(1)</keyword>
<keyword id="KW-0375">Hydrogen ion transport</keyword>
<keyword id="KW-0406">Ion transport</keyword>
<keyword id="KW-0472">Membrane</keyword>
<keyword id="KW-0547">Nucleotide-binding</keyword>
<keyword id="KW-1278">Translocase</keyword>
<keyword id="KW-0813">Transport</keyword>
<reference key="1">
    <citation type="journal article" date="2004" name="Nat. Genet.">
        <title>Evidence in the Legionella pneumophila genome for exploitation of host cell functions and high genome plasticity.</title>
        <authorList>
            <person name="Cazalet C."/>
            <person name="Rusniok C."/>
            <person name="Brueggemann H."/>
            <person name="Zidane N."/>
            <person name="Magnier A."/>
            <person name="Ma L."/>
            <person name="Tichit M."/>
            <person name="Jarraud S."/>
            <person name="Bouchier C."/>
            <person name="Vandenesch F."/>
            <person name="Kunst F."/>
            <person name="Etienne J."/>
            <person name="Glaser P."/>
            <person name="Buchrieser C."/>
        </authorList>
    </citation>
    <scope>NUCLEOTIDE SEQUENCE [LARGE SCALE GENOMIC DNA]</scope>
    <source>
        <strain>Lens</strain>
    </source>
</reference>
<gene>
    <name evidence="1" type="primary">atpA</name>
    <name type="ordered locus">lpl2912</name>
</gene>
<feature type="chain" id="PRO_0000238269" description="ATP synthase subunit alpha">
    <location>
        <begin position="1"/>
        <end position="517"/>
    </location>
</feature>
<feature type="binding site" evidence="1">
    <location>
        <begin position="173"/>
        <end position="180"/>
    </location>
    <ligand>
        <name>ATP</name>
        <dbReference type="ChEBI" id="CHEBI:30616"/>
    </ligand>
</feature>
<feature type="site" description="Required for activity" evidence="1">
    <location>
        <position position="377"/>
    </location>
</feature>
<name>ATPA_LEGPL</name>
<proteinExistence type="inferred from homology"/>
<comment type="function">
    <text evidence="1">Produces ATP from ADP in the presence of a proton gradient across the membrane. The alpha chain is a regulatory subunit.</text>
</comment>
<comment type="catalytic activity">
    <reaction evidence="1">
        <text>ATP + H2O + 4 H(+)(in) = ADP + phosphate + 5 H(+)(out)</text>
        <dbReference type="Rhea" id="RHEA:57720"/>
        <dbReference type="ChEBI" id="CHEBI:15377"/>
        <dbReference type="ChEBI" id="CHEBI:15378"/>
        <dbReference type="ChEBI" id="CHEBI:30616"/>
        <dbReference type="ChEBI" id="CHEBI:43474"/>
        <dbReference type="ChEBI" id="CHEBI:456216"/>
        <dbReference type="EC" id="7.1.2.2"/>
    </reaction>
</comment>
<comment type="subunit">
    <text evidence="1">F-type ATPases have 2 components, CF(1) - the catalytic core - and CF(0) - the membrane proton channel. CF(1) has five subunits: alpha(3), beta(3), gamma(1), delta(1), epsilon(1). CF(0) has three main subunits: a(1), b(2) and c(9-12). The alpha and beta chains form an alternating ring which encloses part of the gamma chain. CF(1) is attached to CF(0) by a central stalk formed by the gamma and epsilon chains, while a peripheral stalk is formed by the delta and b chains.</text>
</comment>
<comment type="subcellular location">
    <subcellularLocation>
        <location evidence="1">Cell inner membrane</location>
        <topology evidence="1">Peripheral membrane protein</topology>
    </subcellularLocation>
</comment>
<comment type="similarity">
    <text evidence="1">Belongs to the ATPase alpha/beta chains family.</text>
</comment>
<protein>
    <recommendedName>
        <fullName evidence="1">ATP synthase subunit alpha</fullName>
        <ecNumber evidence="1">7.1.2.2</ecNumber>
    </recommendedName>
    <alternativeName>
        <fullName evidence="1">ATP synthase F1 sector subunit alpha</fullName>
    </alternativeName>
    <alternativeName>
        <fullName evidence="1">F-ATPase subunit alpha</fullName>
    </alternativeName>
</protein>
<accession>Q5WSG6</accession>
<dbReference type="EC" id="7.1.2.2" evidence="1"/>
<dbReference type="EMBL" id="CR628337">
    <property type="protein sequence ID" value="CAH17156.1"/>
    <property type="molecule type" value="Genomic_DNA"/>
</dbReference>
<dbReference type="RefSeq" id="WP_011216820.1">
    <property type="nucleotide sequence ID" value="NC_006369.1"/>
</dbReference>
<dbReference type="SMR" id="Q5WSG6"/>
<dbReference type="KEGG" id="lpf:lpl2912"/>
<dbReference type="LegioList" id="lpl2912"/>
<dbReference type="HOGENOM" id="CLU_010091_2_1_6"/>
<dbReference type="Proteomes" id="UP000002517">
    <property type="component" value="Chromosome"/>
</dbReference>
<dbReference type="GO" id="GO:0005886">
    <property type="term" value="C:plasma membrane"/>
    <property type="evidence" value="ECO:0007669"/>
    <property type="project" value="UniProtKB-SubCell"/>
</dbReference>
<dbReference type="GO" id="GO:0045259">
    <property type="term" value="C:proton-transporting ATP synthase complex"/>
    <property type="evidence" value="ECO:0007669"/>
    <property type="project" value="UniProtKB-KW"/>
</dbReference>
<dbReference type="GO" id="GO:0043531">
    <property type="term" value="F:ADP binding"/>
    <property type="evidence" value="ECO:0007669"/>
    <property type="project" value="TreeGrafter"/>
</dbReference>
<dbReference type="GO" id="GO:0005524">
    <property type="term" value="F:ATP binding"/>
    <property type="evidence" value="ECO:0007669"/>
    <property type="project" value="UniProtKB-UniRule"/>
</dbReference>
<dbReference type="GO" id="GO:0046933">
    <property type="term" value="F:proton-transporting ATP synthase activity, rotational mechanism"/>
    <property type="evidence" value="ECO:0007669"/>
    <property type="project" value="UniProtKB-UniRule"/>
</dbReference>
<dbReference type="CDD" id="cd18113">
    <property type="entry name" value="ATP-synt_F1_alpha_C"/>
    <property type="match status" value="1"/>
</dbReference>
<dbReference type="CDD" id="cd18116">
    <property type="entry name" value="ATP-synt_F1_alpha_N"/>
    <property type="match status" value="1"/>
</dbReference>
<dbReference type="CDD" id="cd01132">
    <property type="entry name" value="F1-ATPase_alpha_CD"/>
    <property type="match status" value="1"/>
</dbReference>
<dbReference type="FunFam" id="1.20.150.20:FF:000001">
    <property type="entry name" value="ATP synthase subunit alpha"/>
    <property type="match status" value="1"/>
</dbReference>
<dbReference type="FunFam" id="2.40.30.20:FF:000001">
    <property type="entry name" value="ATP synthase subunit alpha"/>
    <property type="match status" value="1"/>
</dbReference>
<dbReference type="FunFam" id="3.40.50.300:FF:000002">
    <property type="entry name" value="ATP synthase subunit alpha"/>
    <property type="match status" value="1"/>
</dbReference>
<dbReference type="Gene3D" id="2.40.30.20">
    <property type="match status" value="1"/>
</dbReference>
<dbReference type="Gene3D" id="1.20.150.20">
    <property type="entry name" value="ATP synthase alpha/beta chain, C-terminal domain"/>
    <property type="match status" value="1"/>
</dbReference>
<dbReference type="Gene3D" id="3.40.50.300">
    <property type="entry name" value="P-loop containing nucleotide triphosphate hydrolases"/>
    <property type="match status" value="1"/>
</dbReference>
<dbReference type="HAMAP" id="MF_01346">
    <property type="entry name" value="ATP_synth_alpha_bact"/>
    <property type="match status" value="1"/>
</dbReference>
<dbReference type="InterPro" id="IPR023366">
    <property type="entry name" value="ATP_synth_asu-like_sf"/>
</dbReference>
<dbReference type="InterPro" id="IPR000793">
    <property type="entry name" value="ATP_synth_asu_C"/>
</dbReference>
<dbReference type="InterPro" id="IPR038376">
    <property type="entry name" value="ATP_synth_asu_C_sf"/>
</dbReference>
<dbReference type="InterPro" id="IPR033732">
    <property type="entry name" value="ATP_synth_F1_a_nt-bd_dom"/>
</dbReference>
<dbReference type="InterPro" id="IPR005294">
    <property type="entry name" value="ATP_synth_F1_asu"/>
</dbReference>
<dbReference type="InterPro" id="IPR020003">
    <property type="entry name" value="ATPase_a/bsu_AS"/>
</dbReference>
<dbReference type="InterPro" id="IPR004100">
    <property type="entry name" value="ATPase_F1/V1/A1_a/bsu_N"/>
</dbReference>
<dbReference type="InterPro" id="IPR036121">
    <property type="entry name" value="ATPase_F1/V1/A1_a/bsu_N_sf"/>
</dbReference>
<dbReference type="InterPro" id="IPR000194">
    <property type="entry name" value="ATPase_F1/V1/A1_a/bsu_nucl-bd"/>
</dbReference>
<dbReference type="InterPro" id="IPR027417">
    <property type="entry name" value="P-loop_NTPase"/>
</dbReference>
<dbReference type="NCBIfam" id="TIGR00962">
    <property type="entry name" value="atpA"/>
    <property type="match status" value="1"/>
</dbReference>
<dbReference type="NCBIfam" id="NF009884">
    <property type="entry name" value="PRK13343.1"/>
    <property type="match status" value="1"/>
</dbReference>
<dbReference type="PANTHER" id="PTHR48082">
    <property type="entry name" value="ATP SYNTHASE SUBUNIT ALPHA, MITOCHONDRIAL"/>
    <property type="match status" value="1"/>
</dbReference>
<dbReference type="PANTHER" id="PTHR48082:SF2">
    <property type="entry name" value="ATP SYNTHASE SUBUNIT ALPHA, MITOCHONDRIAL"/>
    <property type="match status" value="1"/>
</dbReference>
<dbReference type="Pfam" id="PF00006">
    <property type="entry name" value="ATP-synt_ab"/>
    <property type="match status" value="1"/>
</dbReference>
<dbReference type="Pfam" id="PF00306">
    <property type="entry name" value="ATP-synt_ab_C"/>
    <property type="match status" value="1"/>
</dbReference>
<dbReference type="Pfam" id="PF02874">
    <property type="entry name" value="ATP-synt_ab_N"/>
    <property type="match status" value="1"/>
</dbReference>
<dbReference type="PIRSF" id="PIRSF039088">
    <property type="entry name" value="F_ATPase_subunit_alpha"/>
    <property type="match status" value="1"/>
</dbReference>
<dbReference type="SUPFAM" id="SSF47917">
    <property type="entry name" value="C-terminal domain of alpha and beta subunits of F1 ATP synthase"/>
    <property type="match status" value="1"/>
</dbReference>
<dbReference type="SUPFAM" id="SSF50615">
    <property type="entry name" value="N-terminal domain of alpha and beta subunits of F1 ATP synthase"/>
    <property type="match status" value="1"/>
</dbReference>
<dbReference type="SUPFAM" id="SSF52540">
    <property type="entry name" value="P-loop containing nucleoside triphosphate hydrolases"/>
    <property type="match status" value="1"/>
</dbReference>
<dbReference type="PROSITE" id="PS00152">
    <property type="entry name" value="ATPASE_ALPHA_BETA"/>
    <property type="match status" value="1"/>
</dbReference>
<organism>
    <name type="scientific">Legionella pneumophila (strain Lens)</name>
    <dbReference type="NCBI Taxonomy" id="297245"/>
    <lineage>
        <taxon>Bacteria</taxon>
        <taxon>Pseudomonadati</taxon>
        <taxon>Pseudomonadota</taxon>
        <taxon>Gammaproteobacteria</taxon>
        <taxon>Legionellales</taxon>
        <taxon>Legionellaceae</taxon>
        <taxon>Legionella</taxon>
    </lineage>
</organism>
<sequence length="517" mass="55514">MSEQVALNPSEISELIRKKIDQFSVVSEARNEGTIVSLKDGIVRLHGLADVMAGEMIEFPGGVYGLALNLERDSVGAVILGDSSTLAEGQKGKCTGRILEVPVGKGLLGRVVDALGNPIDGKGPIESSGMSPIEKVAPGVITRKSVDQPVQTGLKAIDAMIPVGRGQRELIIGDRQTGKTAIAIDAIINQKGTGVKCVYVAVGQKASSVASIVRKLEEHGALEHTIVVVAGASDSAALQYIAPYSGCTMGEYFMERGEDALIVYDDLTKQAWAYRQISLLLRRPPGREAYPGDIFYLHSRLLERAARINADEVEKLTNGEVKGKTGSLTALPIIETQAGDVSAFVPTNVISITDGQIFLDVDLFNSGVRPAINSGLSVSRVGGAAQTKIMKKLGGGTRLALAQFRELEAFSQFASDLDDATRKQLERGQRITELMKQKQYSPLTVAEMGVSLFVVEKGYLDDVPVNEISSFEASLHDYMRSTHAALLHAINEAGAYDNEIEAKLKKAVEEFKNTGSW</sequence>
<evidence type="ECO:0000255" key="1">
    <source>
        <dbReference type="HAMAP-Rule" id="MF_01346"/>
    </source>
</evidence>